<accession>A9MML7</accession>
<dbReference type="EMBL" id="CP000880">
    <property type="protein sequence ID" value="ABX20886.1"/>
    <property type="molecule type" value="Genomic_DNA"/>
</dbReference>
<dbReference type="SMR" id="A9MML7"/>
<dbReference type="STRING" id="41514.SARI_00975"/>
<dbReference type="KEGG" id="ses:SARI_00975"/>
<dbReference type="HOGENOM" id="CLU_155793_1_0_6"/>
<dbReference type="Proteomes" id="UP000002084">
    <property type="component" value="Chromosome"/>
</dbReference>
<dbReference type="GO" id="GO:0005829">
    <property type="term" value="C:cytosol"/>
    <property type="evidence" value="ECO:0007669"/>
    <property type="project" value="UniProtKB-SubCell"/>
</dbReference>
<dbReference type="GO" id="GO:0044781">
    <property type="term" value="P:bacterial-type flagellum organization"/>
    <property type="evidence" value="ECO:0007669"/>
    <property type="project" value="UniProtKB-KW"/>
</dbReference>
<dbReference type="GO" id="GO:1902209">
    <property type="term" value="P:negative regulation of bacterial-type flagellum assembly"/>
    <property type="evidence" value="ECO:0007669"/>
    <property type="project" value="UniProtKB-UniRule"/>
</dbReference>
<dbReference type="GO" id="GO:0006457">
    <property type="term" value="P:protein folding"/>
    <property type="evidence" value="ECO:0007669"/>
    <property type="project" value="UniProtKB-UniRule"/>
</dbReference>
<dbReference type="FunFam" id="1.20.58.380:FF:000002">
    <property type="entry name" value="Flagellar protein FliT"/>
    <property type="match status" value="1"/>
</dbReference>
<dbReference type="Gene3D" id="1.20.58.380">
    <property type="entry name" value="Flagellar protein flit"/>
    <property type="match status" value="1"/>
</dbReference>
<dbReference type="HAMAP" id="MF_01180">
    <property type="entry name" value="FliT"/>
    <property type="match status" value="1"/>
</dbReference>
<dbReference type="InterPro" id="IPR008622">
    <property type="entry name" value="FliT"/>
</dbReference>
<dbReference type="NCBIfam" id="NF007836">
    <property type="entry name" value="PRK10548.1"/>
    <property type="match status" value="1"/>
</dbReference>
<dbReference type="Pfam" id="PF05400">
    <property type="entry name" value="FliT"/>
    <property type="match status" value="1"/>
</dbReference>
<protein>
    <recommendedName>
        <fullName evidence="1">Flagellar protein FliT</fullName>
    </recommendedName>
</protein>
<feature type="chain" id="PRO_0000353887" description="Flagellar protein FliT">
    <location>
        <begin position="1"/>
        <end position="122"/>
    </location>
</feature>
<feature type="region of interest" description="Required for homodimerization" evidence="1">
    <location>
        <begin position="1"/>
        <end position="50"/>
    </location>
</feature>
<feature type="region of interest" description="FliD binding" evidence="1">
    <location>
        <begin position="60"/>
        <end position="98"/>
    </location>
</feature>
<sequence length="122" mass="13732">MTSTVEFINRWQRIALLSQSLLELAQRGEWELLLQQEVSYLQSIETVMEKQTPPGITRSIQDMVAGYIKQTLDNEQRLKGLLQQRLDELSGLIGQSTRQKSLNNAYGRLSGMLLVPDAPGAS</sequence>
<comment type="function">
    <text evidence="1">Dual-function protein that regulates the transcription of class 2 flagellar operons and that also acts as an export chaperone for the filament-capping protein FliD. As a transcriptional regulator, acts as an anti-FlhDC factor; it directly binds FlhC, thus inhibiting the binding of the FlhC/FlhD complex to class 2 promoters, resulting in decreased expression of class 2 flagellar operons. As a chaperone, effects FliD transition to the membrane by preventing its premature polymerization, and by directing it to the export apparatus.</text>
</comment>
<comment type="subunit">
    <text evidence="1">Homodimer. Interacts with FliD and FlhC.</text>
</comment>
<comment type="subcellular location">
    <subcellularLocation>
        <location evidence="1">Cytoplasm</location>
        <location evidence="1">Cytosol</location>
    </subcellularLocation>
</comment>
<comment type="similarity">
    <text evidence="1">Belongs to the FliT family.</text>
</comment>
<reference key="1">
    <citation type="submission" date="2007-11" db="EMBL/GenBank/DDBJ databases">
        <authorList>
            <consortium name="The Salmonella enterica serovar Arizonae Genome Sequencing Project"/>
            <person name="McClelland M."/>
            <person name="Sanderson E.K."/>
            <person name="Porwollik S."/>
            <person name="Spieth J."/>
            <person name="Clifton W.S."/>
            <person name="Fulton R."/>
            <person name="Chunyan W."/>
            <person name="Wollam A."/>
            <person name="Shah N."/>
            <person name="Pepin K."/>
            <person name="Bhonagiri V."/>
            <person name="Nash W."/>
            <person name="Johnson M."/>
            <person name="Thiruvilangam P."/>
            <person name="Wilson R."/>
        </authorList>
    </citation>
    <scope>NUCLEOTIDE SEQUENCE [LARGE SCALE GENOMIC DNA]</scope>
    <source>
        <strain>ATCC BAA-731 / CDC346-86 / RSK2980</strain>
    </source>
</reference>
<gene>
    <name evidence="1" type="primary">fliT</name>
    <name type="ordered locus">SARI_00975</name>
</gene>
<keyword id="KW-1005">Bacterial flagellum biogenesis</keyword>
<keyword id="KW-0143">Chaperone</keyword>
<keyword id="KW-0963">Cytoplasm</keyword>
<keyword id="KW-1185">Reference proteome</keyword>
<keyword id="KW-0678">Repressor</keyword>
<keyword id="KW-0804">Transcription</keyword>
<keyword id="KW-0805">Transcription regulation</keyword>
<name>FLIT_SALAR</name>
<proteinExistence type="inferred from homology"/>
<evidence type="ECO:0000255" key="1">
    <source>
        <dbReference type="HAMAP-Rule" id="MF_01180"/>
    </source>
</evidence>
<organism>
    <name type="scientific">Salmonella arizonae (strain ATCC BAA-731 / CDC346-86 / RSK2980)</name>
    <dbReference type="NCBI Taxonomy" id="41514"/>
    <lineage>
        <taxon>Bacteria</taxon>
        <taxon>Pseudomonadati</taxon>
        <taxon>Pseudomonadota</taxon>
        <taxon>Gammaproteobacteria</taxon>
        <taxon>Enterobacterales</taxon>
        <taxon>Enterobacteriaceae</taxon>
        <taxon>Salmonella</taxon>
    </lineage>
</organism>